<protein>
    <recommendedName>
        <fullName evidence="1">Carbamoyl phosphate synthase small chain</fullName>
        <ecNumber evidence="1">6.3.5.5</ecNumber>
    </recommendedName>
    <alternativeName>
        <fullName evidence="1">Carbamoyl phosphate synthetase glutamine chain</fullName>
    </alternativeName>
</protein>
<name>CARA_STAAC</name>
<feature type="chain" id="PRO_0000112315" description="Carbamoyl phosphate synthase small chain">
    <location>
        <begin position="1"/>
        <end position="366"/>
    </location>
</feature>
<feature type="domain" description="Glutamine amidotransferase type-1" evidence="1">
    <location>
        <begin position="173"/>
        <end position="360"/>
    </location>
</feature>
<feature type="region of interest" description="CPSase" evidence="1">
    <location>
        <begin position="1"/>
        <end position="171"/>
    </location>
</feature>
<feature type="active site" description="Nucleophile" evidence="1">
    <location>
        <position position="248"/>
    </location>
</feature>
<feature type="active site" evidence="1">
    <location>
        <position position="333"/>
    </location>
</feature>
<feature type="active site" evidence="1">
    <location>
        <position position="335"/>
    </location>
</feature>
<feature type="binding site" evidence="1">
    <location>
        <position position="47"/>
    </location>
    <ligand>
        <name>L-glutamine</name>
        <dbReference type="ChEBI" id="CHEBI:58359"/>
    </ligand>
</feature>
<feature type="binding site" evidence="1">
    <location>
        <position position="221"/>
    </location>
    <ligand>
        <name>L-glutamine</name>
        <dbReference type="ChEBI" id="CHEBI:58359"/>
    </ligand>
</feature>
<feature type="binding site" evidence="1">
    <location>
        <position position="223"/>
    </location>
    <ligand>
        <name>L-glutamine</name>
        <dbReference type="ChEBI" id="CHEBI:58359"/>
    </ligand>
</feature>
<feature type="binding site" evidence="1">
    <location>
        <position position="249"/>
    </location>
    <ligand>
        <name>L-glutamine</name>
        <dbReference type="ChEBI" id="CHEBI:58359"/>
    </ligand>
</feature>
<feature type="binding site" evidence="1">
    <location>
        <position position="252"/>
    </location>
    <ligand>
        <name>L-glutamine</name>
        <dbReference type="ChEBI" id="CHEBI:58359"/>
    </ligand>
</feature>
<feature type="binding site" evidence="1">
    <location>
        <position position="290"/>
    </location>
    <ligand>
        <name>L-glutamine</name>
        <dbReference type="ChEBI" id="CHEBI:58359"/>
    </ligand>
</feature>
<feature type="binding site" evidence="1">
    <location>
        <position position="292"/>
    </location>
    <ligand>
        <name>L-glutamine</name>
        <dbReference type="ChEBI" id="CHEBI:58359"/>
    </ligand>
</feature>
<feature type="binding site" evidence="1">
    <location>
        <position position="293"/>
    </location>
    <ligand>
        <name>L-glutamine</name>
        <dbReference type="ChEBI" id="CHEBI:58359"/>
    </ligand>
</feature>
<comment type="function">
    <text evidence="1">Small subunit of the glutamine-dependent carbamoyl phosphate synthetase (CPSase). CPSase catalyzes the formation of carbamoyl phosphate from the ammonia moiety of glutamine, carbonate, and phosphate donated by ATP, constituting the first step of 2 biosynthetic pathways, one leading to arginine and/or urea and the other to pyrimidine nucleotides. The small subunit (glutamine amidotransferase) binds and cleaves glutamine to supply the large subunit with the substrate ammonia.</text>
</comment>
<comment type="catalytic activity">
    <reaction evidence="1">
        <text>hydrogencarbonate + L-glutamine + 2 ATP + H2O = carbamoyl phosphate + L-glutamate + 2 ADP + phosphate + 2 H(+)</text>
        <dbReference type="Rhea" id="RHEA:18633"/>
        <dbReference type="ChEBI" id="CHEBI:15377"/>
        <dbReference type="ChEBI" id="CHEBI:15378"/>
        <dbReference type="ChEBI" id="CHEBI:17544"/>
        <dbReference type="ChEBI" id="CHEBI:29985"/>
        <dbReference type="ChEBI" id="CHEBI:30616"/>
        <dbReference type="ChEBI" id="CHEBI:43474"/>
        <dbReference type="ChEBI" id="CHEBI:58228"/>
        <dbReference type="ChEBI" id="CHEBI:58359"/>
        <dbReference type="ChEBI" id="CHEBI:456216"/>
        <dbReference type="EC" id="6.3.5.5"/>
    </reaction>
</comment>
<comment type="catalytic activity">
    <molecule>Carbamoyl phosphate synthase small chain</molecule>
    <reaction evidence="1">
        <text>L-glutamine + H2O = L-glutamate + NH4(+)</text>
        <dbReference type="Rhea" id="RHEA:15889"/>
        <dbReference type="ChEBI" id="CHEBI:15377"/>
        <dbReference type="ChEBI" id="CHEBI:28938"/>
        <dbReference type="ChEBI" id="CHEBI:29985"/>
        <dbReference type="ChEBI" id="CHEBI:58359"/>
    </reaction>
</comment>
<comment type="pathway">
    <text evidence="1">Amino-acid biosynthesis; L-arginine biosynthesis; carbamoyl phosphate from bicarbonate: step 1/1.</text>
</comment>
<comment type="pathway">
    <text evidence="1">Pyrimidine metabolism; UMP biosynthesis via de novo pathway; (S)-dihydroorotate from bicarbonate: step 1/3.</text>
</comment>
<comment type="subunit">
    <text evidence="1">Composed of two chains; the small (or glutamine) chain promotes the hydrolysis of glutamine to ammonia, which is used by the large (or ammonia) chain to synthesize carbamoyl phosphate. Tetramer of heterodimers (alpha,beta)4.</text>
</comment>
<comment type="similarity">
    <text evidence="1">Belongs to the CarA family.</text>
</comment>
<proteinExistence type="inferred from homology"/>
<sequence length="366" mass="40394">MQSKRYLVLEDGSFYEGYRLGSDNLTVGEIVFNTAMTGYQETISDPSYTGQIITFTYPLIGNYGINRDDFESLVPTLNGIVVKEASAHPSNFRQQKTLHDVLELHQIPGIAGVDTRSITRKIRQHGVLKAGFTDRKEDIDQLVKHLQQVELPKNEVEIVSTKTPYVSTGKDLSVVLVDFGKKQNIVRELNVRGCNVTVVPYTTTAEEILAMAPDGVMLSNGPGNPEVVECAIPMIQGILGKIPFFGICLGHQLFALSQGASSFKMKFGHRGANHPVKNLETGKVDITSQNHGYAIDIDSLKSTDLEVTHLALNDGTVEGLKHKTLPAFSVQYHPEANPGPSDSNYLFDDFVAMMTNFKEKERHINA</sequence>
<organism>
    <name type="scientific">Staphylococcus aureus (strain COL)</name>
    <dbReference type="NCBI Taxonomy" id="93062"/>
    <lineage>
        <taxon>Bacteria</taxon>
        <taxon>Bacillati</taxon>
        <taxon>Bacillota</taxon>
        <taxon>Bacilli</taxon>
        <taxon>Bacillales</taxon>
        <taxon>Staphylococcaceae</taxon>
        <taxon>Staphylococcus</taxon>
    </lineage>
</organism>
<dbReference type="EC" id="6.3.5.5" evidence="1"/>
<dbReference type="EMBL" id="CP000046">
    <property type="protein sequence ID" value="AAW38051.1"/>
    <property type="molecule type" value="Genomic_DNA"/>
</dbReference>
<dbReference type="RefSeq" id="WP_001190913.1">
    <property type="nucleotide sequence ID" value="NZ_JBGOFO010000002.1"/>
</dbReference>
<dbReference type="SMR" id="Q5HGN0"/>
<dbReference type="KEGG" id="sac:SACOL1214"/>
<dbReference type="HOGENOM" id="CLU_035901_2_1_9"/>
<dbReference type="UniPathway" id="UPA00068">
    <property type="reaction ID" value="UER00171"/>
</dbReference>
<dbReference type="UniPathway" id="UPA00070">
    <property type="reaction ID" value="UER00115"/>
</dbReference>
<dbReference type="Proteomes" id="UP000000530">
    <property type="component" value="Chromosome"/>
</dbReference>
<dbReference type="GO" id="GO:0005524">
    <property type="term" value="F:ATP binding"/>
    <property type="evidence" value="ECO:0007669"/>
    <property type="project" value="UniProtKB-UniRule"/>
</dbReference>
<dbReference type="GO" id="GO:0004088">
    <property type="term" value="F:carbamoyl-phosphate synthase (glutamine-hydrolyzing) activity"/>
    <property type="evidence" value="ECO:0007669"/>
    <property type="project" value="UniProtKB-UniRule"/>
</dbReference>
<dbReference type="GO" id="GO:0004359">
    <property type="term" value="F:glutaminase activity"/>
    <property type="evidence" value="ECO:0007669"/>
    <property type="project" value="RHEA"/>
</dbReference>
<dbReference type="GO" id="GO:0006207">
    <property type="term" value="P:'de novo' pyrimidine nucleobase biosynthetic process"/>
    <property type="evidence" value="ECO:0007669"/>
    <property type="project" value="InterPro"/>
</dbReference>
<dbReference type="GO" id="GO:0044205">
    <property type="term" value="P:'de novo' UMP biosynthetic process"/>
    <property type="evidence" value="ECO:0007669"/>
    <property type="project" value="UniProtKB-UniRule"/>
</dbReference>
<dbReference type="GO" id="GO:0006541">
    <property type="term" value="P:glutamine metabolic process"/>
    <property type="evidence" value="ECO:0007669"/>
    <property type="project" value="InterPro"/>
</dbReference>
<dbReference type="GO" id="GO:0006526">
    <property type="term" value="P:L-arginine biosynthetic process"/>
    <property type="evidence" value="ECO:0007669"/>
    <property type="project" value="UniProtKB-UniRule"/>
</dbReference>
<dbReference type="CDD" id="cd01744">
    <property type="entry name" value="GATase1_CPSase"/>
    <property type="match status" value="1"/>
</dbReference>
<dbReference type="FunFam" id="3.40.50.880:FF:000029">
    <property type="entry name" value="Carbamoyl-phosphate synthase small chain"/>
    <property type="match status" value="1"/>
</dbReference>
<dbReference type="FunFam" id="3.50.30.20:FF:000001">
    <property type="entry name" value="Carbamoyl-phosphate synthase small chain"/>
    <property type="match status" value="1"/>
</dbReference>
<dbReference type="Gene3D" id="3.40.50.880">
    <property type="match status" value="1"/>
</dbReference>
<dbReference type="Gene3D" id="3.50.30.20">
    <property type="entry name" value="Carbamoyl-phosphate synthase small subunit, N-terminal domain"/>
    <property type="match status" value="1"/>
</dbReference>
<dbReference type="HAMAP" id="MF_01209">
    <property type="entry name" value="CPSase_S_chain"/>
    <property type="match status" value="1"/>
</dbReference>
<dbReference type="InterPro" id="IPR050472">
    <property type="entry name" value="Anth_synth/Amidotransfase"/>
</dbReference>
<dbReference type="InterPro" id="IPR006274">
    <property type="entry name" value="CarbamoylP_synth_ssu"/>
</dbReference>
<dbReference type="InterPro" id="IPR002474">
    <property type="entry name" value="CarbamoylP_synth_ssu_N"/>
</dbReference>
<dbReference type="InterPro" id="IPR036480">
    <property type="entry name" value="CarbP_synth_ssu_N_sf"/>
</dbReference>
<dbReference type="InterPro" id="IPR029062">
    <property type="entry name" value="Class_I_gatase-like"/>
</dbReference>
<dbReference type="InterPro" id="IPR035686">
    <property type="entry name" value="CPSase_GATase1"/>
</dbReference>
<dbReference type="InterPro" id="IPR017926">
    <property type="entry name" value="GATASE"/>
</dbReference>
<dbReference type="NCBIfam" id="TIGR01368">
    <property type="entry name" value="CPSaseIIsmall"/>
    <property type="match status" value="1"/>
</dbReference>
<dbReference type="NCBIfam" id="NF009475">
    <property type="entry name" value="PRK12838.1"/>
    <property type="match status" value="1"/>
</dbReference>
<dbReference type="PANTHER" id="PTHR43418:SF7">
    <property type="entry name" value="CARBAMOYL-PHOSPHATE SYNTHASE SMALL CHAIN"/>
    <property type="match status" value="1"/>
</dbReference>
<dbReference type="PANTHER" id="PTHR43418">
    <property type="entry name" value="MULTIFUNCTIONAL TRYPTOPHAN BIOSYNTHESIS PROTEIN-RELATED"/>
    <property type="match status" value="1"/>
</dbReference>
<dbReference type="Pfam" id="PF00988">
    <property type="entry name" value="CPSase_sm_chain"/>
    <property type="match status" value="1"/>
</dbReference>
<dbReference type="Pfam" id="PF00117">
    <property type="entry name" value="GATase"/>
    <property type="match status" value="1"/>
</dbReference>
<dbReference type="PRINTS" id="PR00097">
    <property type="entry name" value="ANTSNTHASEII"/>
</dbReference>
<dbReference type="PRINTS" id="PR00099">
    <property type="entry name" value="CPSGATASE"/>
</dbReference>
<dbReference type="PRINTS" id="PR00096">
    <property type="entry name" value="GATASE"/>
</dbReference>
<dbReference type="SMART" id="SM01097">
    <property type="entry name" value="CPSase_sm_chain"/>
    <property type="match status" value="1"/>
</dbReference>
<dbReference type="SUPFAM" id="SSF52021">
    <property type="entry name" value="Carbamoyl phosphate synthetase, small subunit N-terminal domain"/>
    <property type="match status" value="1"/>
</dbReference>
<dbReference type="SUPFAM" id="SSF52317">
    <property type="entry name" value="Class I glutamine amidotransferase-like"/>
    <property type="match status" value="1"/>
</dbReference>
<dbReference type="PROSITE" id="PS51273">
    <property type="entry name" value="GATASE_TYPE_1"/>
    <property type="match status" value="1"/>
</dbReference>
<gene>
    <name evidence="1" type="primary">carA</name>
    <name type="synonym">pyrAA</name>
    <name type="ordered locus">SACOL1214</name>
</gene>
<accession>Q5HGN0</accession>
<evidence type="ECO:0000255" key="1">
    <source>
        <dbReference type="HAMAP-Rule" id="MF_01209"/>
    </source>
</evidence>
<keyword id="KW-0028">Amino-acid biosynthesis</keyword>
<keyword id="KW-0055">Arginine biosynthesis</keyword>
<keyword id="KW-0067">ATP-binding</keyword>
<keyword id="KW-0315">Glutamine amidotransferase</keyword>
<keyword id="KW-0436">Ligase</keyword>
<keyword id="KW-0547">Nucleotide-binding</keyword>
<keyword id="KW-0665">Pyrimidine biosynthesis</keyword>
<reference key="1">
    <citation type="journal article" date="2005" name="J. Bacteriol.">
        <title>Insights on evolution of virulence and resistance from the complete genome analysis of an early methicillin-resistant Staphylococcus aureus strain and a biofilm-producing methicillin-resistant Staphylococcus epidermidis strain.</title>
        <authorList>
            <person name="Gill S.R."/>
            <person name="Fouts D.E."/>
            <person name="Archer G.L."/>
            <person name="Mongodin E.F."/>
            <person name="DeBoy R.T."/>
            <person name="Ravel J."/>
            <person name="Paulsen I.T."/>
            <person name="Kolonay J.F."/>
            <person name="Brinkac L.M."/>
            <person name="Beanan M.J."/>
            <person name="Dodson R.J."/>
            <person name="Daugherty S.C."/>
            <person name="Madupu R."/>
            <person name="Angiuoli S.V."/>
            <person name="Durkin A.S."/>
            <person name="Haft D.H."/>
            <person name="Vamathevan J.J."/>
            <person name="Khouri H."/>
            <person name="Utterback T.R."/>
            <person name="Lee C."/>
            <person name="Dimitrov G."/>
            <person name="Jiang L."/>
            <person name="Qin H."/>
            <person name="Weidman J."/>
            <person name="Tran K."/>
            <person name="Kang K.H."/>
            <person name="Hance I.R."/>
            <person name="Nelson K.E."/>
            <person name="Fraser C.M."/>
        </authorList>
    </citation>
    <scope>NUCLEOTIDE SEQUENCE [LARGE SCALE GENOMIC DNA]</scope>
    <source>
        <strain>COL</strain>
    </source>
</reference>